<feature type="chain" id="PRO_0000226210" description="Ketol-acid reductoisomerase (NADP(+))">
    <location>
        <begin position="1"/>
        <end position="338"/>
    </location>
</feature>
<feature type="domain" description="KARI N-terminal Rossmann" evidence="2">
    <location>
        <begin position="1"/>
        <end position="181"/>
    </location>
</feature>
<feature type="domain" description="KARI C-terminal knotted" evidence="3">
    <location>
        <begin position="182"/>
        <end position="327"/>
    </location>
</feature>
<feature type="active site" evidence="1">
    <location>
        <position position="107"/>
    </location>
</feature>
<feature type="binding site" evidence="1">
    <location>
        <begin position="24"/>
        <end position="27"/>
    </location>
    <ligand>
        <name>NADP(+)</name>
        <dbReference type="ChEBI" id="CHEBI:58349"/>
    </ligand>
</feature>
<feature type="binding site" evidence="1">
    <location>
        <position position="47"/>
    </location>
    <ligand>
        <name>NADP(+)</name>
        <dbReference type="ChEBI" id="CHEBI:58349"/>
    </ligand>
</feature>
<feature type="binding site" evidence="1">
    <location>
        <position position="50"/>
    </location>
    <ligand>
        <name>NADP(+)</name>
        <dbReference type="ChEBI" id="CHEBI:58349"/>
    </ligand>
</feature>
<feature type="binding site" evidence="1">
    <location>
        <position position="52"/>
    </location>
    <ligand>
        <name>NADP(+)</name>
        <dbReference type="ChEBI" id="CHEBI:58349"/>
    </ligand>
</feature>
<feature type="binding site" evidence="1">
    <location>
        <begin position="82"/>
        <end position="85"/>
    </location>
    <ligand>
        <name>NADP(+)</name>
        <dbReference type="ChEBI" id="CHEBI:58349"/>
    </ligand>
</feature>
<feature type="binding site" evidence="1">
    <location>
        <position position="133"/>
    </location>
    <ligand>
        <name>NADP(+)</name>
        <dbReference type="ChEBI" id="CHEBI:58349"/>
    </ligand>
</feature>
<feature type="binding site" evidence="1">
    <location>
        <position position="190"/>
    </location>
    <ligand>
        <name>Mg(2+)</name>
        <dbReference type="ChEBI" id="CHEBI:18420"/>
        <label>1</label>
    </ligand>
</feature>
<feature type="binding site" evidence="1">
    <location>
        <position position="190"/>
    </location>
    <ligand>
        <name>Mg(2+)</name>
        <dbReference type="ChEBI" id="CHEBI:18420"/>
        <label>2</label>
    </ligand>
</feature>
<feature type="binding site" evidence="1">
    <location>
        <position position="194"/>
    </location>
    <ligand>
        <name>Mg(2+)</name>
        <dbReference type="ChEBI" id="CHEBI:18420"/>
        <label>1</label>
    </ligand>
</feature>
<feature type="binding site" evidence="1">
    <location>
        <position position="226"/>
    </location>
    <ligand>
        <name>Mg(2+)</name>
        <dbReference type="ChEBI" id="CHEBI:18420"/>
        <label>2</label>
    </ligand>
</feature>
<feature type="binding site" evidence="1">
    <location>
        <position position="230"/>
    </location>
    <ligand>
        <name>Mg(2+)</name>
        <dbReference type="ChEBI" id="CHEBI:18420"/>
        <label>2</label>
    </ligand>
</feature>
<feature type="binding site" evidence="1">
    <location>
        <position position="251"/>
    </location>
    <ligand>
        <name>substrate</name>
    </ligand>
</feature>
<organism>
    <name type="scientific">Thiobacillus denitrificans (strain ATCC 25259 / T1)</name>
    <dbReference type="NCBI Taxonomy" id="292415"/>
    <lineage>
        <taxon>Bacteria</taxon>
        <taxon>Pseudomonadati</taxon>
        <taxon>Pseudomonadota</taxon>
        <taxon>Betaproteobacteria</taxon>
        <taxon>Nitrosomonadales</taxon>
        <taxon>Thiobacillaceae</taxon>
        <taxon>Thiobacillus</taxon>
    </lineage>
</organism>
<name>ILVC_THIDA</name>
<evidence type="ECO:0000255" key="1">
    <source>
        <dbReference type="HAMAP-Rule" id="MF_00435"/>
    </source>
</evidence>
<evidence type="ECO:0000255" key="2">
    <source>
        <dbReference type="PROSITE-ProRule" id="PRU01197"/>
    </source>
</evidence>
<evidence type="ECO:0000255" key="3">
    <source>
        <dbReference type="PROSITE-ProRule" id="PRU01198"/>
    </source>
</evidence>
<keyword id="KW-0028">Amino-acid biosynthesis</keyword>
<keyword id="KW-0100">Branched-chain amino acid biosynthesis</keyword>
<keyword id="KW-0460">Magnesium</keyword>
<keyword id="KW-0479">Metal-binding</keyword>
<keyword id="KW-0521">NADP</keyword>
<keyword id="KW-0560">Oxidoreductase</keyword>
<keyword id="KW-1185">Reference proteome</keyword>
<reference key="1">
    <citation type="journal article" date="2006" name="J. Bacteriol.">
        <title>The genome sequence of the obligately chemolithoautotrophic, facultatively anaerobic bacterium Thiobacillus denitrificans.</title>
        <authorList>
            <person name="Beller H.R."/>
            <person name="Chain P.S."/>
            <person name="Letain T.E."/>
            <person name="Chakicherla A."/>
            <person name="Larimer F.W."/>
            <person name="Richardson P.M."/>
            <person name="Coleman M.A."/>
            <person name="Wood A.P."/>
            <person name="Kelly D.P."/>
        </authorList>
    </citation>
    <scope>NUCLEOTIDE SEQUENCE [LARGE SCALE GENOMIC DNA]</scope>
    <source>
        <strain>ATCC 25259 / T1</strain>
    </source>
</reference>
<accession>Q3SHE4</accession>
<comment type="function">
    <text evidence="1">Involved in the biosynthesis of branched-chain amino acids (BCAA). Catalyzes an alkyl-migration followed by a ketol-acid reduction of (S)-2-acetolactate (S2AL) to yield (R)-2,3-dihydroxy-isovalerate. In the isomerase reaction, S2AL is rearranged via a Mg-dependent methyl migration to produce 3-hydroxy-3-methyl-2-ketobutyrate (HMKB). In the reductase reaction, this 2-ketoacid undergoes a metal-dependent reduction by NADPH to yield (R)-2,3-dihydroxy-isovalerate.</text>
</comment>
<comment type="catalytic activity">
    <reaction evidence="1">
        <text>(2R)-2,3-dihydroxy-3-methylbutanoate + NADP(+) = (2S)-2-acetolactate + NADPH + H(+)</text>
        <dbReference type="Rhea" id="RHEA:22068"/>
        <dbReference type="ChEBI" id="CHEBI:15378"/>
        <dbReference type="ChEBI" id="CHEBI:49072"/>
        <dbReference type="ChEBI" id="CHEBI:57783"/>
        <dbReference type="ChEBI" id="CHEBI:58349"/>
        <dbReference type="ChEBI" id="CHEBI:58476"/>
        <dbReference type="EC" id="1.1.1.86"/>
    </reaction>
</comment>
<comment type="catalytic activity">
    <reaction evidence="1">
        <text>(2R,3R)-2,3-dihydroxy-3-methylpentanoate + NADP(+) = (S)-2-ethyl-2-hydroxy-3-oxobutanoate + NADPH + H(+)</text>
        <dbReference type="Rhea" id="RHEA:13493"/>
        <dbReference type="ChEBI" id="CHEBI:15378"/>
        <dbReference type="ChEBI" id="CHEBI:49256"/>
        <dbReference type="ChEBI" id="CHEBI:49258"/>
        <dbReference type="ChEBI" id="CHEBI:57783"/>
        <dbReference type="ChEBI" id="CHEBI:58349"/>
        <dbReference type="EC" id="1.1.1.86"/>
    </reaction>
</comment>
<comment type="cofactor">
    <cofactor evidence="1">
        <name>Mg(2+)</name>
        <dbReference type="ChEBI" id="CHEBI:18420"/>
    </cofactor>
    <text evidence="1">Binds 2 magnesium ions per subunit.</text>
</comment>
<comment type="pathway">
    <text evidence="1">Amino-acid biosynthesis; L-isoleucine biosynthesis; L-isoleucine from 2-oxobutanoate: step 2/4.</text>
</comment>
<comment type="pathway">
    <text evidence="1">Amino-acid biosynthesis; L-valine biosynthesis; L-valine from pyruvate: step 2/4.</text>
</comment>
<comment type="similarity">
    <text evidence="1">Belongs to the ketol-acid reductoisomerase family.</text>
</comment>
<proteinExistence type="inferred from homology"/>
<gene>
    <name evidence="1" type="primary">ilvC</name>
    <name type="ordered locus">Tbd_1989</name>
</gene>
<sequence length="338" mass="36566">MKVYYDKDADLSLIKQRKVAIVGYGSQGHAHANNLKDSGVDVTVALRPGSASAKKAENAGLTVKSVPEAVAGADLVMILTPDEFQSRLYRDEIEPNIKQGATLAFAHGFSIHYNQVVPRADLDVIMIAPKAPGHTVRSEFVKGGGIPDLIAIYQDASGKAKETALSYASAIGGGRTGIIETTFKDETETDLFGEQAVLCGGAVELVKAGFDTLVEAGYAPEMAYFECLHELKLIVDLMYEGGIANMNYSISNNAEYGEYVTGVKVINEQSRAAMKECLANIQNGAYAKRFILEGQANYPEMTAWRRNNAAHQIEVVGAKLRSMMPWIAANKLVDHSKN</sequence>
<dbReference type="EC" id="1.1.1.86" evidence="1"/>
<dbReference type="EMBL" id="CP000116">
    <property type="protein sequence ID" value="AAZ97942.1"/>
    <property type="molecule type" value="Genomic_DNA"/>
</dbReference>
<dbReference type="RefSeq" id="WP_011312501.1">
    <property type="nucleotide sequence ID" value="NC_007404.1"/>
</dbReference>
<dbReference type="SMR" id="Q3SHE4"/>
<dbReference type="STRING" id="292415.Tbd_1989"/>
<dbReference type="KEGG" id="tbd:Tbd_1989"/>
<dbReference type="eggNOG" id="COG0059">
    <property type="taxonomic scope" value="Bacteria"/>
</dbReference>
<dbReference type="HOGENOM" id="CLU_033821_0_1_4"/>
<dbReference type="OrthoDB" id="9804088at2"/>
<dbReference type="UniPathway" id="UPA00047">
    <property type="reaction ID" value="UER00056"/>
</dbReference>
<dbReference type="UniPathway" id="UPA00049">
    <property type="reaction ID" value="UER00060"/>
</dbReference>
<dbReference type="Proteomes" id="UP000008291">
    <property type="component" value="Chromosome"/>
</dbReference>
<dbReference type="GO" id="GO:0005829">
    <property type="term" value="C:cytosol"/>
    <property type="evidence" value="ECO:0007669"/>
    <property type="project" value="TreeGrafter"/>
</dbReference>
<dbReference type="GO" id="GO:0004455">
    <property type="term" value="F:ketol-acid reductoisomerase activity"/>
    <property type="evidence" value="ECO:0007669"/>
    <property type="project" value="UniProtKB-UniRule"/>
</dbReference>
<dbReference type="GO" id="GO:0000287">
    <property type="term" value="F:magnesium ion binding"/>
    <property type="evidence" value="ECO:0007669"/>
    <property type="project" value="UniProtKB-UniRule"/>
</dbReference>
<dbReference type="GO" id="GO:0050661">
    <property type="term" value="F:NADP binding"/>
    <property type="evidence" value="ECO:0007669"/>
    <property type="project" value="InterPro"/>
</dbReference>
<dbReference type="GO" id="GO:0009097">
    <property type="term" value="P:isoleucine biosynthetic process"/>
    <property type="evidence" value="ECO:0007669"/>
    <property type="project" value="UniProtKB-UniRule"/>
</dbReference>
<dbReference type="GO" id="GO:0009099">
    <property type="term" value="P:L-valine biosynthetic process"/>
    <property type="evidence" value="ECO:0007669"/>
    <property type="project" value="UniProtKB-UniRule"/>
</dbReference>
<dbReference type="FunFam" id="3.40.50.720:FF:000023">
    <property type="entry name" value="Ketol-acid reductoisomerase (NADP(+))"/>
    <property type="match status" value="1"/>
</dbReference>
<dbReference type="Gene3D" id="6.10.240.10">
    <property type="match status" value="1"/>
</dbReference>
<dbReference type="Gene3D" id="3.40.50.720">
    <property type="entry name" value="NAD(P)-binding Rossmann-like Domain"/>
    <property type="match status" value="1"/>
</dbReference>
<dbReference type="HAMAP" id="MF_00435">
    <property type="entry name" value="IlvC"/>
    <property type="match status" value="1"/>
</dbReference>
<dbReference type="InterPro" id="IPR008927">
    <property type="entry name" value="6-PGluconate_DH-like_C_sf"/>
</dbReference>
<dbReference type="InterPro" id="IPR013023">
    <property type="entry name" value="KARI"/>
</dbReference>
<dbReference type="InterPro" id="IPR000506">
    <property type="entry name" value="KARI_C"/>
</dbReference>
<dbReference type="InterPro" id="IPR013116">
    <property type="entry name" value="KARI_N"/>
</dbReference>
<dbReference type="InterPro" id="IPR014359">
    <property type="entry name" value="KARI_prok"/>
</dbReference>
<dbReference type="InterPro" id="IPR036291">
    <property type="entry name" value="NAD(P)-bd_dom_sf"/>
</dbReference>
<dbReference type="NCBIfam" id="TIGR00465">
    <property type="entry name" value="ilvC"/>
    <property type="match status" value="1"/>
</dbReference>
<dbReference type="NCBIfam" id="NF004017">
    <property type="entry name" value="PRK05479.1"/>
    <property type="match status" value="1"/>
</dbReference>
<dbReference type="NCBIfam" id="NF009940">
    <property type="entry name" value="PRK13403.1"/>
    <property type="match status" value="1"/>
</dbReference>
<dbReference type="PANTHER" id="PTHR21371">
    <property type="entry name" value="KETOL-ACID REDUCTOISOMERASE, MITOCHONDRIAL"/>
    <property type="match status" value="1"/>
</dbReference>
<dbReference type="PANTHER" id="PTHR21371:SF1">
    <property type="entry name" value="KETOL-ACID REDUCTOISOMERASE, MITOCHONDRIAL"/>
    <property type="match status" value="1"/>
</dbReference>
<dbReference type="Pfam" id="PF01450">
    <property type="entry name" value="KARI_C"/>
    <property type="match status" value="1"/>
</dbReference>
<dbReference type="Pfam" id="PF07991">
    <property type="entry name" value="KARI_N"/>
    <property type="match status" value="1"/>
</dbReference>
<dbReference type="PIRSF" id="PIRSF000116">
    <property type="entry name" value="IlvC_gammaproteo"/>
    <property type="match status" value="1"/>
</dbReference>
<dbReference type="SUPFAM" id="SSF48179">
    <property type="entry name" value="6-phosphogluconate dehydrogenase C-terminal domain-like"/>
    <property type="match status" value="1"/>
</dbReference>
<dbReference type="SUPFAM" id="SSF51735">
    <property type="entry name" value="NAD(P)-binding Rossmann-fold domains"/>
    <property type="match status" value="1"/>
</dbReference>
<dbReference type="PROSITE" id="PS51851">
    <property type="entry name" value="KARI_C"/>
    <property type="match status" value="1"/>
</dbReference>
<dbReference type="PROSITE" id="PS51850">
    <property type="entry name" value="KARI_N"/>
    <property type="match status" value="1"/>
</dbReference>
<protein>
    <recommendedName>
        <fullName evidence="1">Ketol-acid reductoisomerase (NADP(+))</fullName>
        <shortName evidence="1">KARI</shortName>
        <ecNumber evidence="1">1.1.1.86</ecNumber>
    </recommendedName>
    <alternativeName>
        <fullName evidence="1">Acetohydroxy-acid isomeroreductase</fullName>
        <shortName evidence="1">AHIR</shortName>
    </alternativeName>
    <alternativeName>
        <fullName evidence="1">Alpha-keto-beta-hydroxylacyl reductoisomerase</fullName>
    </alternativeName>
    <alternativeName>
        <fullName evidence="1">Ketol-acid reductoisomerase type 1</fullName>
    </alternativeName>
    <alternativeName>
        <fullName evidence="1">Ketol-acid reductoisomerase type I</fullName>
    </alternativeName>
</protein>